<protein>
    <recommendedName>
        <fullName>78 kDa dihydrolipoyllysine-residue acetyltransferase component of pyruvate dehydrogenase complex</fullName>
        <ecNumber>2.3.1.12</ecNumber>
    </recommendedName>
    <alternativeName>
        <fullName>78 kDa dihydrolipoamide acetyltransferase component of pyruvate dehydrogenase complex</fullName>
    </alternativeName>
    <alternativeName>
        <fullName>Pyruvate dehydrogenase complex component E2 1</fullName>
        <shortName>PDC-E2 1</shortName>
        <shortName>PDCE2 1</shortName>
    </alternativeName>
</protein>
<name>ODP2_SOLTU</name>
<comment type="function">
    <text>The pyruvate dehydrogenase complex catalyzes the overall conversion of pyruvate to acetyl-CoA and CO(2). It contains multiple copies of three enzymatic components: pyruvate dehydrogenase (E1), dihydrolipoamide acetyltransferase (E2) and lipoamide dehydrogenase (E3).</text>
</comment>
<comment type="catalytic activity">
    <reaction>
        <text>N(6)-[(R)-dihydrolipoyl]-L-lysyl-[protein] + acetyl-CoA = N(6)-[(R)-S(8)-acetyldihydrolipoyl]-L-lysyl-[protein] + CoA</text>
        <dbReference type="Rhea" id="RHEA:17017"/>
        <dbReference type="Rhea" id="RHEA-COMP:10475"/>
        <dbReference type="Rhea" id="RHEA-COMP:10478"/>
        <dbReference type="ChEBI" id="CHEBI:57287"/>
        <dbReference type="ChEBI" id="CHEBI:57288"/>
        <dbReference type="ChEBI" id="CHEBI:83100"/>
        <dbReference type="ChEBI" id="CHEBI:83111"/>
        <dbReference type="EC" id="2.3.1.12"/>
    </reaction>
</comment>
<comment type="cofactor">
    <cofactor evidence="1">
        <name>(R)-lipoate</name>
        <dbReference type="ChEBI" id="CHEBI:83088"/>
    </cofactor>
    <text evidence="1">Binds 2 lipoyl cofactors covalently.</text>
</comment>
<comment type="subunit">
    <text evidence="1">Forms a 60-polypeptide structural core.</text>
</comment>
<comment type="subcellular location">
    <subcellularLocation>
        <location>Mitochondrion matrix</location>
    </subcellularLocation>
</comment>
<comment type="similarity">
    <text evidence="2">Belongs to the 2-oxoacid dehydrogenase family.</text>
</comment>
<keyword id="KW-0012">Acyltransferase</keyword>
<keyword id="KW-0903">Direct protein sequencing</keyword>
<keyword id="KW-0450">Lipoyl</keyword>
<keyword id="KW-0496">Mitochondrion</keyword>
<keyword id="KW-1185">Reference proteome</keyword>
<keyword id="KW-0808">Transferase</keyword>
<evidence type="ECO:0000250" key="1"/>
<evidence type="ECO:0000305" key="2"/>
<proteinExistence type="evidence at protein level"/>
<organism>
    <name type="scientific">Solanum tuberosum</name>
    <name type="common">Potato</name>
    <dbReference type="NCBI Taxonomy" id="4113"/>
    <lineage>
        <taxon>Eukaryota</taxon>
        <taxon>Viridiplantae</taxon>
        <taxon>Streptophyta</taxon>
        <taxon>Embryophyta</taxon>
        <taxon>Tracheophyta</taxon>
        <taxon>Spermatophyta</taxon>
        <taxon>Magnoliopsida</taxon>
        <taxon>eudicotyledons</taxon>
        <taxon>Gunneridae</taxon>
        <taxon>Pentapetalae</taxon>
        <taxon>asterids</taxon>
        <taxon>lamiids</taxon>
        <taxon>Solanales</taxon>
        <taxon>Solanaceae</taxon>
        <taxon>Solanoideae</taxon>
        <taxon>Solaneae</taxon>
        <taxon>Solanum</taxon>
    </lineage>
</organism>
<feature type="chain" id="PRO_0000162299" description="78 kDa dihydrolipoyllysine-residue acetyltransferase component of pyruvate dehydrogenase complex">
    <location>
        <begin position="1"/>
        <end position="21" status="greater than"/>
    </location>
</feature>
<feature type="non-terminal residue">
    <location>
        <position position="21"/>
    </location>
</feature>
<dbReference type="EC" id="2.3.1.12"/>
<dbReference type="STRING" id="4113.P81421"/>
<dbReference type="InParanoid" id="P81421"/>
<dbReference type="SABIO-RK" id="P81421"/>
<dbReference type="Proteomes" id="UP000011115">
    <property type="component" value="Unassembled WGS sequence"/>
</dbReference>
<dbReference type="GO" id="GO:0005759">
    <property type="term" value="C:mitochondrial matrix"/>
    <property type="evidence" value="ECO:0007669"/>
    <property type="project" value="UniProtKB-SubCell"/>
</dbReference>
<dbReference type="GO" id="GO:0004742">
    <property type="term" value="F:dihydrolipoyllysine-residue acetyltransferase activity"/>
    <property type="evidence" value="ECO:0007669"/>
    <property type="project" value="UniProtKB-EC"/>
</dbReference>
<reference key="1">
    <citation type="journal article" date="1998" name="Biochem. J.">
        <title>Plant mitochondrial pyruvate dehydrogenase complex: purification and identification of catalytic components in potato.</title>
        <authorList>
            <person name="Millar A.H."/>
            <person name="Knorpp C."/>
            <person name="Leaver C.J."/>
            <person name="Hill S.A."/>
        </authorList>
    </citation>
    <scope>PROTEIN SEQUENCE</scope>
    <source>
        <strain>cv. Romano</strain>
        <tissue>Tuber</tissue>
    </source>
</reference>
<accession>P81421</accession>
<sequence>ISAEAPLYAEVGMPALSPTMT</sequence>